<geneLocation type="chloroplast"/>
<sequence>RFKKIRRLGALPGLTSKRPRSGSDLKNQLRSGKRSQYRIRLEEKQKLRFHYGLTERQLLKYVHIAGKAKGSTGQILLQLLEMRLDNILFRLGMASTIPGARQLVNHRHILVNGRIVDIPSYRCKPRDIITTKNKQRSKALIQNFIASSPHQEELPNHLTIDPFQYKGLVNQIIDSKWIGLKINELLVVEYYSRQTDL</sequence>
<gene>
    <name type="primary">rps4</name>
</gene>
<evidence type="ECO:0000250" key="1"/>
<evidence type="ECO:0000305" key="2"/>
<proteinExistence type="inferred from homology"/>
<protein>
    <recommendedName>
        <fullName evidence="2">Small ribosomal subunit protein uS4c</fullName>
    </recommendedName>
    <alternativeName>
        <fullName>30S ribosomal protein S4, chloroplastic</fullName>
    </alternativeName>
</protein>
<keyword id="KW-0150">Chloroplast</keyword>
<keyword id="KW-0934">Plastid</keyword>
<keyword id="KW-0687">Ribonucleoprotein</keyword>
<keyword id="KW-0689">Ribosomal protein</keyword>
<keyword id="KW-0694">RNA-binding</keyword>
<keyword id="KW-0699">rRNA-binding</keyword>
<organism>
    <name type="scientific">Gladiolus papilio</name>
    <name type="common">Goldblotch gladiolus</name>
    <name type="synonym">Gladiolus purpureoauratus</name>
    <dbReference type="NCBI Taxonomy" id="58995"/>
    <lineage>
        <taxon>Eukaryota</taxon>
        <taxon>Viridiplantae</taxon>
        <taxon>Streptophyta</taxon>
        <taxon>Embryophyta</taxon>
        <taxon>Tracheophyta</taxon>
        <taxon>Spermatophyta</taxon>
        <taxon>Magnoliopsida</taxon>
        <taxon>Liliopsida</taxon>
        <taxon>Asparagales</taxon>
        <taxon>Iridaceae</taxon>
        <taxon>Crocoideae</taxon>
        <taxon>Gladioleae</taxon>
        <taxon>Gladiolus</taxon>
    </lineage>
</organism>
<reference key="1">
    <citation type="journal article" date="1997" name="Plant Syst. Evol.">
        <title>Phylogenetic analysis of Iridaceae with parsimony and distance methods using the plastid gene rps4.</title>
        <authorList>
            <person name="Souza-Chies T.T."/>
            <person name="Bittar G."/>
            <person name="Nadot S."/>
            <person name="Carter L."/>
            <person name="Besin E."/>
            <person name="Lejeune B.P."/>
        </authorList>
    </citation>
    <scope>NUCLEOTIDE SEQUENCE [GENOMIC DNA]</scope>
</reference>
<name>RR4_GLAPA</name>
<comment type="function">
    <text evidence="1">One of the primary rRNA binding proteins, it binds directly to 16S rRNA where it nucleates assembly of the body of the 30S subunit.</text>
</comment>
<comment type="function">
    <text evidence="1">With S5 and S12 plays an important role in translational accuracy.</text>
</comment>
<comment type="subunit">
    <text evidence="1">Part of the 30S ribosomal subunit. Contacts protein S5. The interaction surface between S4 and S5 is involved in control of translational fidelity (By similarity).</text>
</comment>
<comment type="subcellular location">
    <subcellularLocation>
        <location>Plastid</location>
        <location>Chloroplast</location>
    </subcellularLocation>
</comment>
<comment type="similarity">
    <text evidence="2">Belongs to the universal ribosomal protein uS4 family.</text>
</comment>
<feature type="chain" id="PRO_0000132597" description="Small ribosomal subunit protein uS4c">
    <location>
        <begin position="1" status="less than"/>
        <end position="197" status="greater than"/>
    </location>
</feature>
<feature type="domain" description="S4 RNA-binding">
    <location>
        <begin position="82"/>
        <end position="143"/>
    </location>
</feature>
<feature type="non-terminal residue">
    <location>
        <position position="1"/>
    </location>
</feature>
<feature type="non-terminal residue">
    <location>
        <position position="197"/>
    </location>
</feature>
<accession>O20221</accession>
<dbReference type="EMBL" id="Z68256">
    <property type="protein sequence ID" value="CAA92554.1"/>
    <property type="molecule type" value="Genomic_DNA"/>
</dbReference>
<dbReference type="SMR" id="O20221"/>
<dbReference type="GO" id="GO:0009507">
    <property type="term" value="C:chloroplast"/>
    <property type="evidence" value="ECO:0007669"/>
    <property type="project" value="UniProtKB-SubCell"/>
</dbReference>
<dbReference type="GO" id="GO:0015935">
    <property type="term" value="C:small ribosomal subunit"/>
    <property type="evidence" value="ECO:0007669"/>
    <property type="project" value="InterPro"/>
</dbReference>
<dbReference type="GO" id="GO:0019843">
    <property type="term" value="F:rRNA binding"/>
    <property type="evidence" value="ECO:0007669"/>
    <property type="project" value="UniProtKB-KW"/>
</dbReference>
<dbReference type="GO" id="GO:0003735">
    <property type="term" value="F:structural constituent of ribosome"/>
    <property type="evidence" value="ECO:0007669"/>
    <property type="project" value="InterPro"/>
</dbReference>
<dbReference type="GO" id="GO:0042274">
    <property type="term" value="P:ribosomal small subunit biogenesis"/>
    <property type="evidence" value="ECO:0007669"/>
    <property type="project" value="TreeGrafter"/>
</dbReference>
<dbReference type="GO" id="GO:0006412">
    <property type="term" value="P:translation"/>
    <property type="evidence" value="ECO:0007669"/>
    <property type="project" value="InterPro"/>
</dbReference>
<dbReference type="CDD" id="cd00165">
    <property type="entry name" value="S4"/>
    <property type="match status" value="1"/>
</dbReference>
<dbReference type="FunFam" id="1.10.1050.10:FF:000002">
    <property type="entry name" value="30S ribosomal protein S4, chloroplastic"/>
    <property type="match status" value="1"/>
</dbReference>
<dbReference type="FunFam" id="3.10.290.10:FF:000081">
    <property type="entry name" value="30S ribosomal protein S4, chloroplastic"/>
    <property type="match status" value="1"/>
</dbReference>
<dbReference type="Gene3D" id="1.10.1050.10">
    <property type="entry name" value="Ribosomal Protein S4 Delta 41, Chain A, domain 1"/>
    <property type="match status" value="1"/>
</dbReference>
<dbReference type="Gene3D" id="3.10.290.10">
    <property type="entry name" value="RNA-binding S4 domain"/>
    <property type="match status" value="1"/>
</dbReference>
<dbReference type="HAMAP" id="MF_01306_B">
    <property type="entry name" value="Ribosomal_uS4_B"/>
    <property type="match status" value="1"/>
</dbReference>
<dbReference type="InterPro" id="IPR022801">
    <property type="entry name" value="Ribosomal_uS4"/>
</dbReference>
<dbReference type="InterPro" id="IPR005709">
    <property type="entry name" value="Ribosomal_uS4_bac-type"/>
</dbReference>
<dbReference type="InterPro" id="IPR018079">
    <property type="entry name" value="Ribosomal_uS4_CS"/>
</dbReference>
<dbReference type="InterPro" id="IPR001912">
    <property type="entry name" value="Ribosomal_uS4_N"/>
</dbReference>
<dbReference type="InterPro" id="IPR002942">
    <property type="entry name" value="S4_RNA-bd"/>
</dbReference>
<dbReference type="InterPro" id="IPR036986">
    <property type="entry name" value="S4_RNA-bd_sf"/>
</dbReference>
<dbReference type="NCBIfam" id="NF003717">
    <property type="entry name" value="PRK05327.1"/>
    <property type="match status" value="1"/>
</dbReference>
<dbReference type="NCBIfam" id="TIGR01017">
    <property type="entry name" value="rpsD_bact"/>
    <property type="match status" value="1"/>
</dbReference>
<dbReference type="PANTHER" id="PTHR11831">
    <property type="entry name" value="30S 40S RIBOSOMAL PROTEIN"/>
    <property type="match status" value="1"/>
</dbReference>
<dbReference type="PANTHER" id="PTHR11831:SF4">
    <property type="entry name" value="SMALL RIBOSOMAL SUBUNIT PROTEIN US4M"/>
    <property type="match status" value="1"/>
</dbReference>
<dbReference type="Pfam" id="PF00163">
    <property type="entry name" value="Ribosomal_S4"/>
    <property type="match status" value="1"/>
</dbReference>
<dbReference type="Pfam" id="PF01479">
    <property type="entry name" value="S4"/>
    <property type="match status" value="1"/>
</dbReference>
<dbReference type="SMART" id="SM01390">
    <property type="entry name" value="Ribosomal_S4"/>
    <property type="match status" value="1"/>
</dbReference>
<dbReference type="SMART" id="SM00363">
    <property type="entry name" value="S4"/>
    <property type="match status" value="1"/>
</dbReference>
<dbReference type="SUPFAM" id="SSF55174">
    <property type="entry name" value="Alpha-L RNA-binding motif"/>
    <property type="match status" value="1"/>
</dbReference>
<dbReference type="PROSITE" id="PS00632">
    <property type="entry name" value="RIBOSOMAL_S4"/>
    <property type="match status" value="1"/>
</dbReference>
<dbReference type="PROSITE" id="PS50889">
    <property type="entry name" value="S4"/>
    <property type="match status" value="1"/>
</dbReference>